<name>CRY26_TITOB</name>
<feature type="peptide" id="PRO_0000461761" description="Cryptide Pep-26" evidence="1">
    <location>
        <begin position="1"/>
        <end position="4"/>
    </location>
</feature>
<accession>P0DRH1</accession>
<organism>
    <name type="scientific">Tityus obscurus</name>
    <name type="common">Amazonian scorpion</name>
    <name type="synonym">Tityus cambridgei</name>
    <dbReference type="NCBI Taxonomy" id="1221240"/>
    <lineage>
        <taxon>Eukaryota</taxon>
        <taxon>Metazoa</taxon>
        <taxon>Ecdysozoa</taxon>
        <taxon>Arthropoda</taxon>
        <taxon>Chelicerata</taxon>
        <taxon>Arachnida</taxon>
        <taxon>Scorpiones</taxon>
        <taxon>Buthida</taxon>
        <taxon>Buthoidea</taxon>
        <taxon>Buthidae</taxon>
        <taxon>Tityus</taxon>
    </lineage>
</organism>
<protein>
    <recommendedName>
        <fullName evidence="2">Cryptide Pep-26</fullName>
    </recommendedName>
</protein>
<evidence type="ECO:0000269" key="1">
    <source>
    </source>
</evidence>
<evidence type="ECO:0000303" key="2">
    <source>
    </source>
</evidence>
<evidence type="ECO:0000305" key="3"/>
<evidence type="ECO:0000305" key="4">
    <source>
    </source>
</evidence>
<keyword id="KW-0903">Direct protein sequencing</keyword>
<keyword id="KW-0964">Secreted</keyword>
<reference key="1">
    <citation type="journal article" date="2018" name="J. Proteomics">
        <title>Profiling the short, linear, non-disulfide bond-containing peptidome from the venom of the scorpion Tityus obscurus.</title>
        <authorList>
            <person name="Dias N.B."/>
            <person name="de Souza B.M."/>
            <person name="Cocchi F.K."/>
            <person name="Chalkidis H.M."/>
            <person name="Dorce V.A.C."/>
            <person name="Palma M.S."/>
        </authorList>
    </citation>
    <scope>PROTEIN SEQUENCE</scope>
    <scope>IDENTIFICATION BY MASS SPECTROMETRY</scope>
    <scope>MASS SPECTROMETRY</scope>
    <scope>SUBCELLULAR LOCATION</scope>
    <source>
        <tissue>Venom</tissue>
    </source>
</reference>
<proteinExistence type="evidence at protein level"/>
<sequence>SILK</sequence>
<dbReference type="GO" id="GO:0005576">
    <property type="term" value="C:extracellular region"/>
    <property type="evidence" value="ECO:0007669"/>
    <property type="project" value="UniProtKB-SubCell"/>
</dbReference>
<comment type="subcellular location">
    <subcellularLocation>
        <location evidence="1">Secreted</location>
    </subcellularLocation>
</comment>
<comment type="tissue specificity">
    <text evidence="4">Expressed by the venom gland.</text>
</comment>
<comment type="mass spectrometry"/>
<comment type="miscellaneous">
    <text evidence="3">The primary structure of this cryptide Pep-26 is identical to that of cryptide Pep-26 from Tityus serrulatus (AC P69940).</text>
</comment>